<sequence length="425" mass="50366">MQQTFFKDPILGEIIFDENTKWMYELVNTKAFQRLRNIKQLGINFHFYPSGVHTRYAHSLGVYELIRRILNSSAFLNIDQIKKQTVLVAGLLHDLGHGPHSHAFEIYFAKNPDFKKQLFIHEKVTSMLVNSEPIVSILKANKIDPNLIGALIDENQNIQPINWWMRQLISSDLDTDRMDYLLRDAYFTGTSHSLVDYQSIINGMECVDNQGTYEIVFQEKCLPFIENFLITRHHMYQSIYSDGRSIATELNLWFVFQRIKALIEEDNFNFHNFKNVESVIKPLLKNQLFKKSLLTCFVKLDDYVFHSFLVNTFETTKDAILKTLLDSYLNTLKFQVKFYESCEKRDLDFELKVKEYQTPSYFITKFNNQFKGFYEGWNKHKNELKIKTSQNKIKNLSEISMLVKRSNELFFENSFYRWANVFYQN</sequence>
<feature type="chain" id="PRO_0000210629" description="Uncharacterized protein MG461">
    <location>
        <begin position="1"/>
        <end position="425"/>
    </location>
</feature>
<feature type="domain" description="HD" evidence="1">
    <location>
        <begin position="55"/>
        <end position="181"/>
    </location>
</feature>
<organism>
    <name type="scientific">Mycoplasma genitalium (strain ATCC 33530 / DSM 19775 / NCTC 10195 / G37)</name>
    <name type="common">Mycoplasmoides genitalium</name>
    <dbReference type="NCBI Taxonomy" id="243273"/>
    <lineage>
        <taxon>Bacteria</taxon>
        <taxon>Bacillati</taxon>
        <taxon>Mycoplasmatota</taxon>
        <taxon>Mycoplasmoidales</taxon>
        <taxon>Mycoplasmoidaceae</taxon>
        <taxon>Mycoplasmoides</taxon>
    </lineage>
</organism>
<gene>
    <name type="ordered locus">MG461</name>
</gene>
<accession>P47699</accession>
<comment type="disruption phenotype">
    <text evidence="2">Probably essential, it was not disrupted in a global transposon mutagenesis study.</text>
</comment>
<protein>
    <recommendedName>
        <fullName>Uncharacterized protein MG461</fullName>
    </recommendedName>
</protein>
<dbReference type="EMBL" id="L43967">
    <property type="protein sequence ID" value="AAC72481.2"/>
    <property type="molecule type" value="Genomic_DNA"/>
</dbReference>
<dbReference type="PIR" id="I64250">
    <property type="entry name" value="I64250"/>
</dbReference>
<dbReference type="RefSeq" id="WP_010869489.1">
    <property type="nucleotide sequence ID" value="NC_000908.2"/>
</dbReference>
<dbReference type="SMR" id="P47699"/>
<dbReference type="FunCoup" id="P47699">
    <property type="interactions" value="92"/>
</dbReference>
<dbReference type="STRING" id="243273.MG_461"/>
<dbReference type="GeneID" id="88282642"/>
<dbReference type="KEGG" id="mge:MG_461"/>
<dbReference type="eggNOG" id="COG1078">
    <property type="taxonomic scope" value="Bacteria"/>
</dbReference>
<dbReference type="HOGENOM" id="CLU_026821_0_0_14"/>
<dbReference type="InParanoid" id="P47699"/>
<dbReference type="OrthoDB" id="9803619at2"/>
<dbReference type="Proteomes" id="UP000000807">
    <property type="component" value="Chromosome"/>
</dbReference>
<dbReference type="GO" id="GO:0008832">
    <property type="term" value="F:dGTPase activity"/>
    <property type="evidence" value="ECO:0000318"/>
    <property type="project" value="GO_Central"/>
</dbReference>
<dbReference type="GO" id="GO:0006203">
    <property type="term" value="P:dGTP catabolic process"/>
    <property type="evidence" value="ECO:0000318"/>
    <property type="project" value="GO_Central"/>
</dbReference>
<dbReference type="CDD" id="cd00077">
    <property type="entry name" value="HDc"/>
    <property type="match status" value="1"/>
</dbReference>
<dbReference type="Gene3D" id="1.10.3210.10">
    <property type="entry name" value="Hypothetical protein af1432"/>
    <property type="match status" value="1"/>
</dbReference>
<dbReference type="InterPro" id="IPR050135">
    <property type="entry name" value="dGTPase-like"/>
</dbReference>
<dbReference type="InterPro" id="IPR003607">
    <property type="entry name" value="HD/PDEase_dom"/>
</dbReference>
<dbReference type="InterPro" id="IPR006674">
    <property type="entry name" value="HD_domain"/>
</dbReference>
<dbReference type="PANTHER" id="PTHR11373">
    <property type="entry name" value="DEOXYNUCLEOSIDE TRIPHOSPHATE TRIPHOSPHOHYDROLASE"/>
    <property type="match status" value="1"/>
</dbReference>
<dbReference type="PANTHER" id="PTHR11373:SF4">
    <property type="entry name" value="DEOXYNUCLEOSIDE TRIPHOSPHATE TRIPHOSPHOHYDROLASE SAMHD1"/>
    <property type="match status" value="1"/>
</dbReference>
<dbReference type="Pfam" id="PF01966">
    <property type="entry name" value="HD"/>
    <property type="match status" value="1"/>
</dbReference>
<dbReference type="SMART" id="SM00471">
    <property type="entry name" value="HDc"/>
    <property type="match status" value="1"/>
</dbReference>
<dbReference type="SUPFAM" id="SSF109604">
    <property type="entry name" value="HD-domain/PDEase-like"/>
    <property type="match status" value="1"/>
</dbReference>
<dbReference type="PROSITE" id="PS51831">
    <property type="entry name" value="HD"/>
    <property type="match status" value="1"/>
</dbReference>
<evidence type="ECO:0000255" key="1">
    <source>
        <dbReference type="PROSITE-ProRule" id="PRU01175"/>
    </source>
</evidence>
<evidence type="ECO:0000269" key="2">
    <source>
    </source>
</evidence>
<reference key="1">
    <citation type="journal article" date="1995" name="Science">
        <title>The minimal gene complement of Mycoplasma genitalium.</title>
        <authorList>
            <person name="Fraser C.M."/>
            <person name="Gocayne J.D."/>
            <person name="White O."/>
            <person name="Adams M.D."/>
            <person name="Clayton R.A."/>
            <person name="Fleischmann R.D."/>
            <person name="Bult C.J."/>
            <person name="Kerlavage A.R."/>
            <person name="Sutton G.G."/>
            <person name="Kelley J.M."/>
            <person name="Fritchman J.L."/>
            <person name="Weidman J.F."/>
            <person name="Small K.V."/>
            <person name="Sandusky M."/>
            <person name="Fuhrmann J.L."/>
            <person name="Nguyen D.T."/>
            <person name="Utterback T.R."/>
            <person name="Saudek D.M."/>
            <person name="Phillips C.A."/>
            <person name="Merrick J.M."/>
            <person name="Tomb J.-F."/>
            <person name="Dougherty B.A."/>
            <person name="Bott K.F."/>
            <person name="Hu P.-C."/>
            <person name="Lucier T.S."/>
            <person name="Peterson S.N."/>
            <person name="Smith H.O."/>
            <person name="Hutchison C.A. III"/>
            <person name="Venter J.C."/>
        </authorList>
    </citation>
    <scope>NUCLEOTIDE SEQUENCE [LARGE SCALE GENOMIC DNA]</scope>
    <source>
        <strain>ATCC 33530 / DSM 19775 / NCTC 10195 / G37</strain>
    </source>
</reference>
<reference key="2">
    <citation type="journal article" date="2006" name="Proc. Natl. Acad. Sci. U.S.A.">
        <title>Essential genes of a minimal bacterium.</title>
        <authorList>
            <person name="Glass J.I."/>
            <person name="Assad-Garcia N."/>
            <person name="Alperovich N."/>
            <person name="Yooseph S."/>
            <person name="Lewis M.R."/>
            <person name="Maruf M."/>
            <person name="Hutchison C.A. III"/>
            <person name="Smith H.O."/>
            <person name="Venter J.C."/>
        </authorList>
    </citation>
    <scope>SEQUENCE REVISION TO 214</scope>
    <scope>DISRUPTION PHENOTYPE</scope>
    <source>
        <strain>ATCC 33530 / DSM 19775 / NCTC 10195 / G37</strain>
    </source>
</reference>
<proteinExistence type="predicted"/>
<name>Y461_MYCGE</name>
<keyword id="KW-1185">Reference proteome</keyword>